<protein>
    <recommendedName>
        <fullName>Zinc finger protein 319</fullName>
    </recommendedName>
</protein>
<organism>
    <name type="scientific">Homo sapiens</name>
    <name type="common">Human</name>
    <dbReference type="NCBI Taxonomy" id="9606"/>
    <lineage>
        <taxon>Eukaryota</taxon>
        <taxon>Metazoa</taxon>
        <taxon>Chordata</taxon>
        <taxon>Craniata</taxon>
        <taxon>Vertebrata</taxon>
        <taxon>Euteleostomi</taxon>
        <taxon>Mammalia</taxon>
        <taxon>Eutheria</taxon>
        <taxon>Euarchontoglires</taxon>
        <taxon>Primates</taxon>
        <taxon>Haplorrhini</taxon>
        <taxon>Catarrhini</taxon>
        <taxon>Hominidae</taxon>
        <taxon>Homo</taxon>
    </lineage>
</organism>
<keyword id="KW-0238">DNA-binding</keyword>
<keyword id="KW-1017">Isopeptide bond</keyword>
<keyword id="KW-0479">Metal-binding</keyword>
<keyword id="KW-0539">Nucleus</keyword>
<keyword id="KW-0597">Phosphoprotein</keyword>
<keyword id="KW-1267">Proteomics identification</keyword>
<keyword id="KW-1185">Reference proteome</keyword>
<keyword id="KW-0677">Repeat</keyword>
<keyword id="KW-0804">Transcription</keyword>
<keyword id="KW-0805">Transcription regulation</keyword>
<keyword id="KW-0832">Ubl conjugation</keyword>
<keyword id="KW-0862">Zinc</keyword>
<keyword id="KW-0863">Zinc-finger</keyword>
<dbReference type="EMBL" id="AB037809">
    <property type="protein sequence ID" value="BAA92626.1"/>
    <property type="status" value="ALT_INIT"/>
    <property type="molecule type" value="mRNA"/>
</dbReference>
<dbReference type="EMBL" id="BC093919">
    <property type="protein sequence ID" value="AAH93919.1"/>
    <property type="molecule type" value="mRNA"/>
</dbReference>
<dbReference type="EMBL" id="BC101767">
    <property type="protein sequence ID" value="AAI01768.1"/>
    <property type="molecule type" value="mRNA"/>
</dbReference>
<dbReference type="CCDS" id="CCDS32462.1"/>
<dbReference type="RefSeq" id="NP_001371294.1">
    <property type="nucleotide sequence ID" value="NM_001384365.1"/>
</dbReference>
<dbReference type="RefSeq" id="NP_001371295.1">
    <property type="nucleotide sequence ID" value="NM_001384366.1"/>
</dbReference>
<dbReference type="RefSeq" id="NP_001371296.1">
    <property type="nucleotide sequence ID" value="NM_001384367.1"/>
</dbReference>
<dbReference type="RefSeq" id="NP_065858.1">
    <property type="nucleotide sequence ID" value="NM_020807.3"/>
</dbReference>
<dbReference type="RefSeq" id="XP_005256126.1">
    <property type="nucleotide sequence ID" value="XM_005256069.3"/>
</dbReference>
<dbReference type="SMR" id="Q9P2F9"/>
<dbReference type="BioGRID" id="121620">
    <property type="interactions" value="27"/>
</dbReference>
<dbReference type="FunCoup" id="Q9P2F9">
    <property type="interactions" value="203"/>
</dbReference>
<dbReference type="IntAct" id="Q9P2F9">
    <property type="interactions" value="20"/>
</dbReference>
<dbReference type="STRING" id="9606.ENSP00000299237"/>
<dbReference type="GlyGen" id="Q9P2F9">
    <property type="glycosylation" value="1 site"/>
</dbReference>
<dbReference type="iPTMnet" id="Q9P2F9"/>
<dbReference type="PhosphoSitePlus" id="Q9P2F9"/>
<dbReference type="BioMuta" id="ZNF319"/>
<dbReference type="DMDM" id="25091755"/>
<dbReference type="jPOST" id="Q9P2F9"/>
<dbReference type="MassIVE" id="Q9P2F9"/>
<dbReference type="PaxDb" id="9606-ENSP00000299237"/>
<dbReference type="PeptideAtlas" id="Q9P2F9"/>
<dbReference type="ProteomicsDB" id="83809"/>
<dbReference type="Antibodypedia" id="29030">
    <property type="antibodies" value="99 antibodies from 19 providers"/>
</dbReference>
<dbReference type="DNASU" id="57567"/>
<dbReference type="Ensembl" id="ENST00000299237.3">
    <property type="protein sequence ID" value="ENSP00000299237.2"/>
    <property type="gene ID" value="ENSG00000166188.3"/>
</dbReference>
<dbReference type="GeneID" id="57567"/>
<dbReference type="KEGG" id="hsa:57567"/>
<dbReference type="MANE-Select" id="ENST00000299237.3">
    <property type="protein sequence ID" value="ENSP00000299237.2"/>
    <property type="RefSeq nucleotide sequence ID" value="NM_020807.3"/>
    <property type="RefSeq protein sequence ID" value="NP_065858.1"/>
</dbReference>
<dbReference type="UCSC" id="uc002emx.2">
    <property type="organism name" value="human"/>
</dbReference>
<dbReference type="AGR" id="HGNC:13644"/>
<dbReference type="CTD" id="57567"/>
<dbReference type="DisGeNET" id="57567"/>
<dbReference type="GeneCards" id="ZNF319"/>
<dbReference type="HGNC" id="HGNC:13644">
    <property type="gene designation" value="ZNF319"/>
</dbReference>
<dbReference type="HPA" id="ENSG00000166188">
    <property type="expression patterns" value="Low tissue specificity"/>
</dbReference>
<dbReference type="MalaCards" id="ZNF319"/>
<dbReference type="neXtProt" id="NX_Q9P2F9"/>
<dbReference type="OpenTargets" id="ENSG00000166188"/>
<dbReference type="PharmGKB" id="PA134937483"/>
<dbReference type="VEuPathDB" id="HostDB:ENSG00000166188"/>
<dbReference type="eggNOG" id="KOG1721">
    <property type="taxonomic scope" value="Eukaryota"/>
</dbReference>
<dbReference type="GeneTree" id="ENSGT00940000160309"/>
<dbReference type="HOGENOM" id="CLU_002678_44_5_1"/>
<dbReference type="InParanoid" id="Q9P2F9"/>
<dbReference type="OMA" id="QHHSAHT"/>
<dbReference type="OrthoDB" id="8895262at2759"/>
<dbReference type="PAN-GO" id="Q9P2F9">
    <property type="GO annotations" value="4 GO annotations based on evolutionary models"/>
</dbReference>
<dbReference type="PhylomeDB" id="Q9P2F9"/>
<dbReference type="TreeFam" id="TF332615"/>
<dbReference type="PathwayCommons" id="Q9P2F9"/>
<dbReference type="SignaLink" id="Q9P2F9"/>
<dbReference type="BioGRID-ORCS" id="57567">
    <property type="hits" value="18 hits in 1183 CRISPR screens"/>
</dbReference>
<dbReference type="ChiTaRS" id="ZNF319">
    <property type="organism name" value="human"/>
</dbReference>
<dbReference type="GenomeRNAi" id="57567"/>
<dbReference type="Pharos" id="Q9P2F9">
    <property type="development level" value="Tdark"/>
</dbReference>
<dbReference type="PRO" id="PR:Q9P2F9"/>
<dbReference type="Proteomes" id="UP000005640">
    <property type="component" value="Chromosome 16"/>
</dbReference>
<dbReference type="RNAct" id="Q9P2F9">
    <property type="molecule type" value="protein"/>
</dbReference>
<dbReference type="Bgee" id="ENSG00000166188">
    <property type="expression patterns" value="Expressed in granulocyte and 126 other cell types or tissues"/>
</dbReference>
<dbReference type="ExpressionAtlas" id="Q9P2F9">
    <property type="expression patterns" value="baseline and differential"/>
</dbReference>
<dbReference type="GO" id="GO:0005634">
    <property type="term" value="C:nucleus"/>
    <property type="evidence" value="ECO:0000318"/>
    <property type="project" value="GO_Central"/>
</dbReference>
<dbReference type="GO" id="GO:0003677">
    <property type="term" value="F:DNA binding"/>
    <property type="evidence" value="ECO:0007669"/>
    <property type="project" value="UniProtKB-KW"/>
</dbReference>
<dbReference type="GO" id="GO:0008270">
    <property type="term" value="F:zinc ion binding"/>
    <property type="evidence" value="ECO:0007669"/>
    <property type="project" value="UniProtKB-KW"/>
</dbReference>
<dbReference type="GO" id="GO:0006357">
    <property type="term" value="P:regulation of transcription by RNA polymerase II"/>
    <property type="evidence" value="ECO:0000318"/>
    <property type="project" value="GO_Central"/>
</dbReference>
<dbReference type="FunFam" id="3.30.160.60:FF:000446">
    <property type="entry name" value="Zinc finger protein"/>
    <property type="match status" value="1"/>
</dbReference>
<dbReference type="FunFam" id="3.30.160.60:FF:000870">
    <property type="entry name" value="zinc finger protein 197 isoform X1"/>
    <property type="match status" value="1"/>
</dbReference>
<dbReference type="FunFam" id="3.30.160.60:FF:000590">
    <property type="entry name" value="Zinc finger protein 319"/>
    <property type="match status" value="1"/>
</dbReference>
<dbReference type="FunFam" id="3.30.160.60:FF:001233">
    <property type="entry name" value="Zinc finger protein 319"/>
    <property type="match status" value="1"/>
</dbReference>
<dbReference type="FunFam" id="3.30.160.60:FF:000185">
    <property type="entry name" value="zinc finger protein 319"/>
    <property type="match status" value="1"/>
</dbReference>
<dbReference type="FunFam" id="3.30.160.60:FF:001049">
    <property type="entry name" value="zinc finger protein 319"/>
    <property type="match status" value="1"/>
</dbReference>
<dbReference type="FunFam" id="3.30.160.60:FF:001217">
    <property type="entry name" value="zinc finger protein 319"/>
    <property type="match status" value="1"/>
</dbReference>
<dbReference type="FunFam" id="3.30.160.60:FF:001270">
    <property type="entry name" value="zinc finger protein 583 isoform X1"/>
    <property type="match status" value="1"/>
</dbReference>
<dbReference type="FunFam" id="3.30.160.60:FF:001238">
    <property type="entry name" value="Zinc finger protein 648"/>
    <property type="match status" value="1"/>
</dbReference>
<dbReference type="FunFam" id="3.30.160.60:FF:001134">
    <property type="entry name" value="Zinc finger protein 70"/>
    <property type="match status" value="1"/>
</dbReference>
<dbReference type="Gene3D" id="3.30.160.60">
    <property type="entry name" value="Classic Zinc Finger"/>
    <property type="match status" value="11"/>
</dbReference>
<dbReference type="InterPro" id="IPR036236">
    <property type="entry name" value="Znf_C2H2_sf"/>
</dbReference>
<dbReference type="InterPro" id="IPR013087">
    <property type="entry name" value="Znf_C2H2_type"/>
</dbReference>
<dbReference type="PANTHER" id="PTHR24379:SF121">
    <property type="entry name" value="C2H2-TYPE DOMAIN-CONTAINING PROTEIN"/>
    <property type="match status" value="1"/>
</dbReference>
<dbReference type="PANTHER" id="PTHR24379">
    <property type="entry name" value="KRAB AND ZINC FINGER DOMAIN-CONTAINING"/>
    <property type="match status" value="1"/>
</dbReference>
<dbReference type="Pfam" id="PF00096">
    <property type="entry name" value="zf-C2H2"/>
    <property type="match status" value="6"/>
</dbReference>
<dbReference type="Pfam" id="PF13465">
    <property type="entry name" value="zf-H2C2_2"/>
    <property type="match status" value="2"/>
</dbReference>
<dbReference type="SMART" id="SM00355">
    <property type="entry name" value="ZnF_C2H2"/>
    <property type="match status" value="14"/>
</dbReference>
<dbReference type="SUPFAM" id="SSF57667">
    <property type="entry name" value="beta-beta-alpha zinc fingers"/>
    <property type="match status" value="8"/>
</dbReference>
<dbReference type="PROSITE" id="PS00028">
    <property type="entry name" value="ZINC_FINGER_C2H2_1"/>
    <property type="match status" value="12"/>
</dbReference>
<dbReference type="PROSITE" id="PS50157">
    <property type="entry name" value="ZINC_FINGER_C2H2_2"/>
    <property type="match status" value="15"/>
</dbReference>
<gene>
    <name type="primary">ZNF319</name>
    <name type="synonym">KIAA1388</name>
</gene>
<accession>Q9P2F9</accession>
<accession>Q52LH8</accession>
<reference key="1">
    <citation type="journal article" date="2000" name="DNA Res.">
        <title>Prediction of the coding sequences of unidentified human genes. XVI. The complete sequences of 150 new cDNA clones from brain which code for large proteins in vitro.</title>
        <authorList>
            <person name="Nagase T."/>
            <person name="Kikuno R."/>
            <person name="Ishikawa K."/>
            <person name="Hirosawa M."/>
            <person name="Ohara O."/>
        </authorList>
    </citation>
    <scope>NUCLEOTIDE SEQUENCE [LARGE SCALE MRNA]</scope>
    <source>
        <tissue>Brain</tissue>
    </source>
</reference>
<reference key="2">
    <citation type="journal article" date="2004" name="Genome Res.">
        <title>The status, quality, and expansion of the NIH full-length cDNA project: the Mammalian Gene Collection (MGC).</title>
        <authorList>
            <consortium name="The MGC Project Team"/>
        </authorList>
    </citation>
    <scope>NUCLEOTIDE SEQUENCE [LARGE SCALE MRNA]</scope>
    <source>
        <tissue>Brain</tissue>
    </source>
</reference>
<reference key="3">
    <citation type="journal article" date="2010" name="Sci. Signal.">
        <title>Quantitative phosphoproteomics reveals widespread full phosphorylation site occupancy during mitosis.</title>
        <authorList>
            <person name="Olsen J.V."/>
            <person name="Vermeulen M."/>
            <person name="Santamaria A."/>
            <person name="Kumar C."/>
            <person name="Miller M.L."/>
            <person name="Jensen L.J."/>
            <person name="Gnad F."/>
            <person name="Cox J."/>
            <person name="Jensen T.S."/>
            <person name="Nigg E.A."/>
            <person name="Brunak S."/>
            <person name="Mann M."/>
        </authorList>
    </citation>
    <scope>PHOSPHORYLATION [LARGE SCALE ANALYSIS] AT SER-281</scope>
    <scope>IDENTIFICATION BY MASS SPECTROMETRY [LARGE SCALE ANALYSIS]</scope>
    <source>
        <tissue>Cervix carcinoma</tissue>
    </source>
</reference>
<reference key="4">
    <citation type="journal article" date="2015" name="Mol. Cell. Proteomics">
        <title>System-wide analysis of SUMOylation dynamics in response to replication stress reveals novel small ubiquitin-like modified target proteins and acceptor lysines relevant for genome stability.</title>
        <authorList>
            <person name="Xiao Z."/>
            <person name="Chang J.G."/>
            <person name="Hendriks I.A."/>
            <person name="Sigurdsson J.O."/>
            <person name="Olsen J.V."/>
            <person name="Vertegaal A.C."/>
        </authorList>
    </citation>
    <scope>SUMOYLATION [LARGE SCALE ANALYSIS] AT LYS-130</scope>
    <scope>IDENTIFICATION BY MASS SPECTROMETRY [LARGE SCALE ANALYSIS]</scope>
</reference>
<reference key="5">
    <citation type="journal article" date="2017" name="Nat. Struct. Mol. Biol.">
        <title>Site-specific mapping of the human SUMO proteome reveals co-modification with phosphorylation.</title>
        <authorList>
            <person name="Hendriks I.A."/>
            <person name="Lyon D."/>
            <person name="Young C."/>
            <person name="Jensen L.J."/>
            <person name="Vertegaal A.C."/>
            <person name="Nielsen M.L."/>
        </authorList>
    </citation>
    <scope>SUMOYLATION [LARGE SCALE ANALYSIS] AT LYS-130</scope>
    <scope>IDENTIFICATION BY MASS SPECTROMETRY [LARGE SCALE ANALYSIS]</scope>
</reference>
<name>ZN319_HUMAN</name>
<sequence>MSESWQQPPQTQPQQPQPPQPQHHAEPPPALAEHTLPPGTAENPLGCAVYGILLQPDPGLQPPQHAPLQAAGEPGPKCGVCGHDLAHLSSPHEHQCLAGHDRSFQCTQCLKIFHQATDLLEHQCVQAEQKPFVCGVCKMGFSLLTSLAQHHSSHSGLVKCSICEKTYKPAEAAEPATTAAPSLPAAPAPSTVTPAEQADKPYSCPICQKPFKHLSELSRHERIHTGEKPYKCTLCDKSFSQSSHLVHHKRTHSSERPYKCAVCEKTFKHRSHLVRHMYAHSGEHHLFRCNVCELHFKESSELLQHPCTPSGERPFRCGECQKAFKRPSDLRQHERTHSAERPFKCDLCPMGFKQQYALMRHRRTHKTEEPFKCGLCEKGFGQPSHLLYHQHVHTLETLFKCPVCQKGFDQSAELLRHKCLPGAAERPFKCPVCNKAYKRASALQKHQLAHCAAAEKPLRCTLCERRFFSSSEFVQHRCDPAREKPLKCPDCEKRFKYASDLQRHRRVHTGEKPYKCPNCDKAFKQREHLNKHQGVHAREQQFKCVWCGERFLDVALLQEHSAQHSAAAAAAEGAYQVAACLP</sequence>
<comment type="function">
    <text>May be involved in transcriptional regulation.</text>
</comment>
<comment type="interaction">
    <interactant intactId="EBI-11993110">
        <id>Q9P2F9</id>
    </interactant>
    <interactant intactId="EBI-742722">
        <id>Q9BUH8</id>
        <label>BEGAIN</label>
    </interactant>
    <organismsDiffer>false</organismsDiffer>
    <experiments>5</experiments>
</comment>
<comment type="interaction">
    <interactant intactId="EBI-11993110">
        <id>Q9P2F9</id>
    </interactant>
    <interactant intactId="EBI-3867333">
        <id>A8MQ03</id>
        <label>CYSRT1</label>
    </interactant>
    <organismsDiffer>false</organismsDiffer>
    <experiments>3</experiments>
</comment>
<comment type="interaction">
    <interactant intactId="EBI-11993110">
        <id>Q9P2F9</id>
    </interactant>
    <interactant intactId="EBI-739789">
        <id>Q92997</id>
        <label>DVL3</label>
    </interactant>
    <organismsDiffer>false</organismsDiffer>
    <experiments>3</experiments>
</comment>
<comment type="interaction">
    <interactant intactId="EBI-11993110">
        <id>Q9P2F9</id>
    </interactant>
    <interactant intactId="EBI-740418">
        <id>O75791</id>
        <label>GRAP2</label>
    </interactant>
    <organismsDiffer>false</organismsDiffer>
    <experiments>3</experiments>
</comment>
<comment type="interaction">
    <interactant intactId="EBI-11993110">
        <id>Q9P2F9</id>
    </interactant>
    <interactant intactId="EBI-1047093">
        <id>O76011</id>
        <label>KRT34</label>
    </interactant>
    <organismsDiffer>false</organismsDiffer>
    <experiments>3</experiments>
</comment>
<comment type="interaction">
    <interactant intactId="EBI-11993110">
        <id>Q9P2F9</id>
    </interactant>
    <interactant intactId="EBI-10171697">
        <id>Q6A162</id>
        <label>KRT40</label>
    </interactant>
    <organismsDiffer>false</organismsDiffer>
    <experiments>3</experiments>
</comment>
<comment type="interaction">
    <interactant intactId="EBI-11993110">
        <id>Q9P2F9</id>
    </interactant>
    <interactant intactId="EBI-12012928">
        <id>P60371</id>
        <label>KRTAP10-6</label>
    </interactant>
    <organismsDiffer>false</organismsDiffer>
    <experiments>3</experiments>
</comment>
<comment type="interaction">
    <interactant intactId="EBI-11993110">
        <id>Q9P2F9</id>
    </interactant>
    <interactant intactId="EBI-10171774">
        <id>P60410</id>
        <label>KRTAP10-8</label>
    </interactant>
    <organismsDiffer>false</organismsDiffer>
    <experiments>3</experiments>
</comment>
<comment type="interaction">
    <interactant intactId="EBI-11993110">
        <id>Q9P2F9</id>
    </interactant>
    <interactant intactId="EBI-10172052">
        <id>P60411</id>
        <label>KRTAP10-9</label>
    </interactant>
    <organismsDiffer>false</organismsDiffer>
    <experiments>3</experiments>
</comment>
<comment type="interaction">
    <interactant intactId="EBI-11993110">
        <id>Q9P2F9</id>
    </interactant>
    <interactant intactId="EBI-10241252">
        <id>Q3SY46</id>
        <label>KRTAP13-3</label>
    </interactant>
    <organismsDiffer>false</organismsDiffer>
    <experiments>3</experiments>
</comment>
<comment type="interaction">
    <interactant intactId="EBI-11993110">
        <id>Q9P2F9</id>
    </interactant>
    <interactant intactId="EBI-22310682">
        <id>P0DPK4</id>
        <label>NOTCH2NLC</label>
    </interactant>
    <organismsDiffer>false</organismsDiffer>
    <experiments>3</experiments>
</comment>
<comment type="interaction">
    <interactant intactId="EBI-11993110">
        <id>Q9P2F9</id>
    </interactant>
    <interactant intactId="EBI-348567">
        <id>O75928-2</id>
        <label>PIAS2</label>
    </interactant>
    <organismsDiffer>false</organismsDiffer>
    <experiments>3</experiments>
</comment>
<comment type="interaction">
    <interactant intactId="EBI-11993110">
        <id>Q9P2F9</id>
    </interactant>
    <interactant intactId="EBI-949255">
        <id>Q58EX7</id>
        <label>PLEKHG4</label>
    </interactant>
    <organismsDiffer>false</organismsDiffer>
    <experiments>3</experiments>
</comment>
<comment type="interaction">
    <interactant intactId="EBI-11993110">
        <id>Q9P2F9</id>
    </interactant>
    <interactant intactId="EBI-12029004">
        <id>P78424</id>
        <label>POU6F2</label>
    </interactant>
    <organismsDiffer>false</organismsDiffer>
    <experiments>3</experiments>
</comment>
<comment type="interaction">
    <interactant intactId="EBI-11993110">
        <id>Q9P2F9</id>
    </interactant>
    <interactant intactId="EBI-2340927">
        <id>P78317</id>
        <label>RNF4</label>
    </interactant>
    <organismsDiffer>false</organismsDiffer>
    <experiments>5</experiments>
</comment>
<comment type="interaction">
    <interactant intactId="EBI-11993110">
        <id>Q9P2F9</id>
    </interactant>
    <interactant intactId="EBI-725997">
        <id>Q8WV44</id>
        <label>TRIM41</label>
    </interactant>
    <organismsDiffer>false</organismsDiffer>
    <experiments>3</experiments>
</comment>
<comment type="interaction">
    <interactant intactId="EBI-11993110">
        <id>Q9P2F9</id>
    </interactant>
    <interactant intactId="EBI-11957238">
        <id>Q2TAL6</id>
        <label>VWC2</label>
    </interactant>
    <organismsDiffer>false</organismsDiffer>
    <experiments>3</experiments>
</comment>
<comment type="interaction">
    <interactant intactId="EBI-11993110">
        <id>Q9P2F9</id>
    </interactant>
    <interactant intactId="EBI-10252492">
        <id>Q6P1L6</id>
        <label>ZNF343</label>
    </interactant>
    <organismsDiffer>false</organismsDiffer>
    <experiments>3</experiments>
</comment>
<comment type="subcellular location">
    <subcellularLocation>
        <location evidence="3">Nucleus</location>
    </subcellularLocation>
</comment>
<comment type="similarity">
    <text evidence="3">Belongs to the krueppel C2H2-type zinc-finger protein family.</text>
</comment>
<comment type="sequence caution" evidence="3">
    <conflict type="erroneous initiation">
        <sequence resource="EMBL-CDS" id="BAA92626"/>
    </conflict>
</comment>
<evidence type="ECO:0000255" key="1">
    <source>
        <dbReference type="PROSITE-ProRule" id="PRU00042"/>
    </source>
</evidence>
<evidence type="ECO:0000256" key="2">
    <source>
        <dbReference type="SAM" id="MobiDB-lite"/>
    </source>
</evidence>
<evidence type="ECO:0000305" key="3"/>
<evidence type="ECO:0007744" key="4">
    <source>
    </source>
</evidence>
<evidence type="ECO:0007744" key="5">
    <source>
    </source>
</evidence>
<evidence type="ECO:0007744" key="6">
    <source>
    </source>
</evidence>
<proteinExistence type="evidence at protein level"/>
<feature type="chain" id="PRO_0000047527" description="Zinc finger protein 319">
    <location>
        <begin position="1"/>
        <end position="582"/>
    </location>
</feature>
<feature type="zinc finger region" description="C2H2-type 1" evidence="1">
    <location>
        <begin position="76"/>
        <end position="100"/>
    </location>
</feature>
<feature type="zinc finger region" description="C2H2-type 2; degenerate" evidence="1">
    <location>
        <begin position="104"/>
        <end position="126"/>
    </location>
</feature>
<feature type="zinc finger region" description="C2H2-type 3" evidence="1">
    <location>
        <begin position="132"/>
        <end position="154"/>
    </location>
</feature>
<feature type="zinc finger region" description="C2H2-type 4" evidence="1">
    <location>
        <begin position="202"/>
        <end position="224"/>
    </location>
</feature>
<feature type="zinc finger region" description="C2H2-type 5" evidence="1">
    <location>
        <begin position="230"/>
        <end position="252"/>
    </location>
</feature>
<feature type="zinc finger region" description="C2H2-type 6" evidence="1">
    <location>
        <begin position="258"/>
        <end position="280"/>
    </location>
</feature>
<feature type="zinc finger region" description="C2H2-type 7; degenerate" evidence="1">
    <location>
        <begin position="287"/>
        <end position="309"/>
    </location>
</feature>
<feature type="zinc finger region" description="C2H2-type 8" evidence="1">
    <location>
        <begin position="315"/>
        <end position="337"/>
    </location>
</feature>
<feature type="zinc finger region" description="C2H2-type 9" evidence="1">
    <location>
        <begin position="343"/>
        <end position="365"/>
    </location>
</feature>
<feature type="zinc finger region" description="C2H2-type 10" evidence="1">
    <location>
        <begin position="371"/>
        <end position="393"/>
    </location>
</feature>
<feature type="zinc finger region" description="C2H2-type 11; degenerate" evidence="1">
    <location>
        <begin position="399"/>
        <end position="421"/>
    </location>
</feature>
<feature type="zinc finger region" description="C2H2-type 12" evidence="1">
    <location>
        <begin position="428"/>
        <end position="450"/>
    </location>
</feature>
<feature type="zinc finger region" description="C2H2-type 13; degenerate" evidence="1">
    <location>
        <begin position="458"/>
        <end position="480"/>
    </location>
</feature>
<feature type="zinc finger region" description="C2H2-type 14" evidence="1">
    <location>
        <begin position="486"/>
        <end position="508"/>
    </location>
</feature>
<feature type="zinc finger region" description="C2H2-type 15" evidence="1">
    <location>
        <begin position="514"/>
        <end position="536"/>
    </location>
</feature>
<feature type="zinc finger region" description="C2H2-type 16" evidence="1">
    <location>
        <begin position="542"/>
        <end position="564"/>
    </location>
</feature>
<feature type="region of interest" description="Disordered" evidence="2">
    <location>
        <begin position="1"/>
        <end position="39"/>
    </location>
</feature>
<feature type="region of interest" description="Disordered" evidence="2">
    <location>
        <begin position="174"/>
        <end position="198"/>
    </location>
</feature>
<feature type="compositionally biased region" description="Low complexity" evidence="2">
    <location>
        <begin position="1"/>
        <end position="14"/>
    </location>
</feature>
<feature type="compositionally biased region" description="Low complexity" evidence="2">
    <location>
        <begin position="174"/>
        <end position="196"/>
    </location>
</feature>
<feature type="modified residue" description="Phosphoserine" evidence="4">
    <location>
        <position position="281"/>
    </location>
</feature>
<feature type="cross-link" description="Glycyl lysine isopeptide (Lys-Gly) (interchain with G-Cter in SUMO2)" evidence="5 6">
    <location>
        <position position="130"/>
    </location>
</feature>